<sequence>MIVKYGGNAMKSVELRRAVAGEIAALRAEQPVVVVHGGGPVIERELAARGIASEFSNGLRVTSPQAMAVVEMALAQLNKQLSQDIGAAVGLLGRDSELLVAEVLDPALGRVGRVTRVNAGLLRTLLGVGLTPVVGCVAVGPDGDALNVNADTAAGAVAGALGEGIVFLTDVDGIYRAYPDPESLASQLPRAEVEAGIRDGWIAGGMIPKVRAALEALDAGAPFAVIASGMQPGVLAAAARGEAGTRLTP</sequence>
<organism>
    <name type="scientific">Deinococcus geothermalis (strain DSM 11300 / CIP 105573 / AG-3a)</name>
    <dbReference type="NCBI Taxonomy" id="319795"/>
    <lineage>
        <taxon>Bacteria</taxon>
        <taxon>Thermotogati</taxon>
        <taxon>Deinococcota</taxon>
        <taxon>Deinococci</taxon>
        <taxon>Deinococcales</taxon>
        <taxon>Deinococcaceae</taxon>
        <taxon>Deinococcus</taxon>
    </lineage>
</organism>
<reference key="1">
    <citation type="submission" date="2006-04" db="EMBL/GenBank/DDBJ databases">
        <title>Complete sequence of chromosome of Deinococcus geothermalis DSM 11300.</title>
        <authorList>
            <person name="Copeland A."/>
            <person name="Lucas S."/>
            <person name="Lapidus A."/>
            <person name="Barry K."/>
            <person name="Detter J.C."/>
            <person name="Glavina del Rio T."/>
            <person name="Hammon N."/>
            <person name="Israni S."/>
            <person name="Dalin E."/>
            <person name="Tice H."/>
            <person name="Pitluck S."/>
            <person name="Brettin T."/>
            <person name="Bruce D."/>
            <person name="Han C."/>
            <person name="Tapia R."/>
            <person name="Saunders E."/>
            <person name="Gilna P."/>
            <person name="Schmutz J."/>
            <person name="Larimer F."/>
            <person name="Land M."/>
            <person name="Hauser L."/>
            <person name="Kyrpides N."/>
            <person name="Kim E."/>
            <person name="Daly M.J."/>
            <person name="Fredrickson J.K."/>
            <person name="Makarova K.S."/>
            <person name="Gaidamakova E.K."/>
            <person name="Zhai M."/>
            <person name="Richardson P."/>
        </authorList>
    </citation>
    <scope>NUCLEOTIDE SEQUENCE [LARGE SCALE GENOMIC DNA]</scope>
    <source>
        <strain>DSM 11300 / CIP 105573 / AG-3a</strain>
    </source>
</reference>
<keyword id="KW-0028">Amino-acid biosynthesis</keyword>
<keyword id="KW-0055">Arginine biosynthesis</keyword>
<keyword id="KW-0067">ATP-binding</keyword>
<keyword id="KW-0963">Cytoplasm</keyword>
<keyword id="KW-0418">Kinase</keyword>
<keyword id="KW-0547">Nucleotide-binding</keyword>
<keyword id="KW-0808">Transferase</keyword>
<gene>
    <name evidence="1" type="primary">argB</name>
    <name type="ordered locus">Dgeo_0079</name>
</gene>
<name>ARGB_DEIGD</name>
<feature type="chain" id="PRO_0000264699" description="Acetylglutamate kinase">
    <location>
        <begin position="1"/>
        <end position="249"/>
    </location>
</feature>
<feature type="binding site" evidence="1">
    <location>
        <begin position="38"/>
        <end position="39"/>
    </location>
    <ligand>
        <name>substrate</name>
    </ligand>
</feature>
<feature type="binding site" evidence="1">
    <location>
        <position position="60"/>
    </location>
    <ligand>
        <name>substrate</name>
    </ligand>
</feature>
<feature type="binding site" evidence="1">
    <location>
        <position position="147"/>
    </location>
    <ligand>
        <name>substrate</name>
    </ligand>
</feature>
<feature type="site" description="Transition state stabilizer" evidence="1">
    <location>
        <position position="4"/>
    </location>
</feature>
<feature type="site" description="Transition state stabilizer" evidence="1">
    <location>
        <position position="209"/>
    </location>
</feature>
<accession>Q1J2A2</accession>
<protein>
    <recommendedName>
        <fullName evidence="1">Acetylglutamate kinase</fullName>
        <ecNumber evidence="1">2.7.2.8</ecNumber>
    </recommendedName>
    <alternativeName>
        <fullName evidence="1">N-acetyl-L-glutamate 5-phosphotransferase</fullName>
    </alternativeName>
    <alternativeName>
        <fullName evidence="1">NAG kinase</fullName>
        <shortName evidence="1">NAGK</shortName>
    </alternativeName>
</protein>
<proteinExistence type="inferred from homology"/>
<dbReference type="EC" id="2.7.2.8" evidence="1"/>
<dbReference type="EMBL" id="CP000359">
    <property type="protein sequence ID" value="ABF44382.1"/>
    <property type="molecule type" value="Genomic_DNA"/>
</dbReference>
<dbReference type="RefSeq" id="WP_011529229.1">
    <property type="nucleotide sequence ID" value="NC_008025.1"/>
</dbReference>
<dbReference type="SMR" id="Q1J2A2"/>
<dbReference type="STRING" id="319795.Dgeo_0079"/>
<dbReference type="KEGG" id="dge:Dgeo_0079"/>
<dbReference type="eggNOG" id="COG0548">
    <property type="taxonomic scope" value="Bacteria"/>
</dbReference>
<dbReference type="HOGENOM" id="CLU_053680_1_0_0"/>
<dbReference type="UniPathway" id="UPA00068">
    <property type="reaction ID" value="UER00107"/>
</dbReference>
<dbReference type="Proteomes" id="UP000002431">
    <property type="component" value="Chromosome"/>
</dbReference>
<dbReference type="GO" id="GO:0005737">
    <property type="term" value="C:cytoplasm"/>
    <property type="evidence" value="ECO:0007669"/>
    <property type="project" value="UniProtKB-SubCell"/>
</dbReference>
<dbReference type="GO" id="GO:0003991">
    <property type="term" value="F:acetylglutamate kinase activity"/>
    <property type="evidence" value="ECO:0007669"/>
    <property type="project" value="UniProtKB-UniRule"/>
</dbReference>
<dbReference type="GO" id="GO:0005524">
    <property type="term" value="F:ATP binding"/>
    <property type="evidence" value="ECO:0007669"/>
    <property type="project" value="UniProtKB-UniRule"/>
</dbReference>
<dbReference type="GO" id="GO:0042450">
    <property type="term" value="P:arginine biosynthetic process via ornithine"/>
    <property type="evidence" value="ECO:0007669"/>
    <property type="project" value="UniProtKB-UniRule"/>
</dbReference>
<dbReference type="GO" id="GO:0006526">
    <property type="term" value="P:L-arginine biosynthetic process"/>
    <property type="evidence" value="ECO:0007669"/>
    <property type="project" value="UniProtKB-UniPathway"/>
</dbReference>
<dbReference type="CDD" id="cd04238">
    <property type="entry name" value="AAK_NAGK-like"/>
    <property type="match status" value="1"/>
</dbReference>
<dbReference type="Gene3D" id="3.40.1160.10">
    <property type="entry name" value="Acetylglutamate kinase-like"/>
    <property type="match status" value="1"/>
</dbReference>
<dbReference type="HAMAP" id="MF_00082">
    <property type="entry name" value="ArgB"/>
    <property type="match status" value="1"/>
</dbReference>
<dbReference type="InterPro" id="IPR036393">
    <property type="entry name" value="AceGlu_kinase-like_sf"/>
</dbReference>
<dbReference type="InterPro" id="IPR004662">
    <property type="entry name" value="AcgluKinase_fam"/>
</dbReference>
<dbReference type="InterPro" id="IPR037528">
    <property type="entry name" value="ArgB"/>
</dbReference>
<dbReference type="InterPro" id="IPR001048">
    <property type="entry name" value="Asp/Glu/Uridylate_kinase"/>
</dbReference>
<dbReference type="NCBIfam" id="TIGR00761">
    <property type="entry name" value="argB"/>
    <property type="match status" value="1"/>
</dbReference>
<dbReference type="PANTHER" id="PTHR23342">
    <property type="entry name" value="N-ACETYLGLUTAMATE SYNTHASE"/>
    <property type="match status" value="1"/>
</dbReference>
<dbReference type="PANTHER" id="PTHR23342:SF0">
    <property type="entry name" value="N-ACETYLGLUTAMATE SYNTHASE, MITOCHONDRIAL"/>
    <property type="match status" value="1"/>
</dbReference>
<dbReference type="Pfam" id="PF00696">
    <property type="entry name" value="AA_kinase"/>
    <property type="match status" value="1"/>
</dbReference>
<dbReference type="PIRSF" id="PIRSF000728">
    <property type="entry name" value="NAGK"/>
    <property type="match status" value="1"/>
</dbReference>
<dbReference type="SUPFAM" id="SSF53633">
    <property type="entry name" value="Carbamate kinase-like"/>
    <property type="match status" value="1"/>
</dbReference>
<evidence type="ECO:0000255" key="1">
    <source>
        <dbReference type="HAMAP-Rule" id="MF_00082"/>
    </source>
</evidence>
<comment type="function">
    <text evidence="1">Catalyzes the ATP-dependent phosphorylation of N-acetyl-L-glutamate.</text>
</comment>
<comment type="catalytic activity">
    <reaction evidence="1">
        <text>N-acetyl-L-glutamate + ATP = N-acetyl-L-glutamyl 5-phosphate + ADP</text>
        <dbReference type="Rhea" id="RHEA:14629"/>
        <dbReference type="ChEBI" id="CHEBI:30616"/>
        <dbReference type="ChEBI" id="CHEBI:44337"/>
        <dbReference type="ChEBI" id="CHEBI:57936"/>
        <dbReference type="ChEBI" id="CHEBI:456216"/>
        <dbReference type="EC" id="2.7.2.8"/>
    </reaction>
</comment>
<comment type="pathway">
    <text evidence="1">Amino-acid biosynthesis; L-arginine biosynthesis; N(2)-acetyl-L-ornithine from L-glutamate: step 2/4.</text>
</comment>
<comment type="subcellular location">
    <subcellularLocation>
        <location evidence="1">Cytoplasm</location>
    </subcellularLocation>
</comment>
<comment type="similarity">
    <text evidence="1">Belongs to the acetylglutamate kinase family. ArgB subfamily.</text>
</comment>